<gene>
    <name evidence="1" type="primary">rps8</name>
    <name type="ordered locus">Kcr_1565</name>
</gene>
<protein>
    <recommendedName>
        <fullName evidence="1">Small ribosomal subunit protein uS8</fullName>
    </recommendedName>
    <alternativeName>
        <fullName evidence="2">30S ribosomal protein S8</fullName>
    </alternativeName>
</protein>
<evidence type="ECO:0000255" key="1">
    <source>
        <dbReference type="HAMAP-Rule" id="MF_01302"/>
    </source>
</evidence>
<evidence type="ECO:0000305" key="2"/>
<sequence length="130" mass="14543">MTRLDPLADAMSTLTNGSMLGKREVVINIASKLIGKVLKVLKEHGYIDEFEYVDDGRFGKYVVRLNGRINKAGVIKPRFPVKVGEFSRWEKIYLPAENVGLIIVSTNQGVMTHREAKERGIGGVLIAYCY</sequence>
<dbReference type="EMBL" id="CP000968">
    <property type="protein sequence ID" value="ACB08310.1"/>
    <property type="molecule type" value="Genomic_DNA"/>
</dbReference>
<dbReference type="RefSeq" id="WP_012310207.1">
    <property type="nucleotide sequence ID" value="NC_010482.1"/>
</dbReference>
<dbReference type="SMR" id="B1L781"/>
<dbReference type="FunCoup" id="B1L781">
    <property type="interactions" value="159"/>
</dbReference>
<dbReference type="STRING" id="374847.Kcr_1565"/>
<dbReference type="EnsemblBacteria" id="ACB08310">
    <property type="protein sequence ID" value="ACB08310"/>
    <property type="gene ID" value="Kcr_1565"/>
</dbReference>
<dbReference type="GeneID" id="6094841"/>
<dbReference type="KEGG" id="kcr:Kcr_1565"/>
<dbReference type="eggNOG" id="arCOG04091">
    <property type="taxonomic scope" value="Archaea"/>
</dbReference>
<dbReference type="HOGENOM" id="CLU_098428_1_1_2"/>
<dbReference type="InParanoid" id="B1L781"/>
<dbReference type="OrthoDB" id="5670at2157"/>
<dbReference type="PhylomeDB" id="B1L781"/>
<dbReference type="Proteomes" id="UP000001686">
    <property type="component" value="Chromosome"/>
</dbReference>
<dbReference type="GO" id="GO:0022627">
    <property type="term" value="C:cytosolic small ribosomal subunit"/>
    <property type="evidence" value="ECO:0000318"/>
    <property type="project" value="GO_Central"/>
</dbReference>
<dbReference type="GO" id="GO:0019843">
    <property type="term" value="F:rRNA binding"/>
    <property type="evidence" value="ECO:0007669"/>
    <property type="project" value="UniProtKB-UniRule"/>
</dbReference>
<dbReference type="GO" id="GO:0003735">
    <property type="term" value="F:structural constituent of ribosome"/>
    <property type="evidence" value="ECO:0000318"/>
    <property type="project" value="GO_Central"/>
</dbReference>
<dbReference type="GO" id="GO:0006412">
    <property type="term" value="P:translation"/>
    <property type="evidence" value="ECO:0007669"/>
    <property type="project" value="UniProtKB-UniRule"/>
</dbReference>
<dbReference type="FunFam" id="3.30.1370.30:FF:000001">
    <property type="entry name" value="40S ribosomal protein S15a"/>
    <property type="match status" value="1"/>
</dbReference>
<dbReference type="Gene3D" id="3.30.1370.30">
    <property type="match status" value="1"/>
</dbReference>
<dbReference type="Gene3D" id="3.30.1490.10">
    <property type="match status" value="1"/>
</dbReference>
<dbReference type="HAMAP" id="MF_01302_A">
    <property type="entry name" value="Ribosomal_uS8_A"/>
    <property type="match status" value="1"/>
</dbReference>
<dbReference type="InterPro" id="IPR000630">
    <property type="entry name" value="Ribosomal_uS8"/>
</dbReference>
<dbReference type="InterPro" id="IPR047863">
    <property type="entry name" value="Ribosomal_uS8_CS"/>
</dbReference>
<dbReference type="InterPro" id="IPR035987">
    <property type="entry name" value="Ribosomal_uS8_sf"/>
</dbReference>
<dbReference type="NCBIfam" id="NF003115">
    <property type="entry name" value="PRK04034.1"/>
    <property type="match status" value="1"/>
</dbReference>
<dbReference type="PANTHER" id="PTHR11758">
    <property type="entry name" value="40S RIBOSOMAL PROTEIN S15A"/>
    <property type="match status" value="1"/>
</dbReference>
<dbReference type="Pfam" id="PF00410">
    <property type="entry name" value="Ribosomal_S8"/>
    <property type="match status" value="1"/>
</dbReference>
<dbReference type="SUPFAM" id="SSF56047">
    <property type="entry name" value="Ribosomal protein S8"/>
    <property type="match status" value="1"/>
</dbReference>
<dbReference type="PROSITE" id="PS00053">
    <property type="entry name" value="RIBOSOMAL_S8"/>
    <property type="match status" value="1"/>
</dbReference>
<reference key="1">
    <citation type="journal article" date="2008" name="Proc. Natl. Acad. Sci. U.S.A.">
        <title>A korarchaeal genome reveals new insights into the evolution of the Archaea.</title>
        <authorList>
            <person name="Elkins J.G."/>
            <person name="Podar M."/>
            <person name="Graham D.E."/>
            <person name="Makarova K.S."/>
            <person name="Wolf Y."/>
            <person name="Randau L."/>
            <person name="Hedlund B.P."/>
            <person name="Brochier-Armanet C."/>
            <person name="Kunin V."/>
            <person name="Anderson I."/>
            <person name="Lapidus A."/>
            <person name="Goltsman E."/>
            <person name="Barry K."/>
            <person name="Koonin E.V."/>
            <person name="Hugenholtz P."/>
            <person name="Kyrpides N."/>
            <person name="Wanner G."/>
            <person name="Richardson P."/>
            <person name="Keller M."/>
            <person name="Stetter K.O."/>
        </authorList>
    </citation>
    <scope>NUCLEOTIDE SEQUENCE [LARGE SCALE GENOMIC DNA]</scope>
    <source>
        <strain>OPF8</strain>
    </source>
</reference>
<feature type="chain" id="PRO_1000140570" description="Small ribosomal subunit protein uS8">
    <location>
        <begin position="1"/>
        <end position="130"/>
    </location>
</feature>
<accession>B1L781</accession>
<proteinExistence type="inferred from homology"/>
<keyword id="KW-1185">Reference proteome</keyword>
<keyword id="KW-0687">Ribonucleoprotein</keyword>
<keyword id="KW-0689">Ribosomal protein</keyword>
<keyword id="KW-0694">RNA-binding</keyword>
<keyword id="KW-0699">rRNA-binding</keyword>
<comment type="function">
    <text evidence="1">One of the primary rRNA binding proteins, it binds directly to 16S rRNA central domain where it helps coordinate assembly of the platform of the 30S subunit.</text>
</comment>
<comment type="subunit">
    <text evidence="1">Part of the 30S ribosomal subunit.</text>
</comment>
<comment type="similarity">
    <text evidence="1">Belongs to the universal ribosomal protein uS8 family.</text>
</comment>
<name>RS8_KORCO</name>
<organism>
    <name type="scientific">Korarchaeum cryptofilum (strain OPF8)</name>
    <dbReference type="NCBI Taxonomy" id="374847"/>
    <lineage>
        <taxon>Archaea</taxon>
        <taxon>Thermoproteota</taxon>
        <taxon>Candidatus Korarchaeia</taxon>
        <taxon>Candidatus Korarchaeales</taxon>
        <taxon>Candidatus Korarchaeaceae</taxon>
        <taxon>Candidatus Korarchaeum</taxon>
    </lineage>
</organism>